<reference key="1">
    <citation type="journal article" date="2005" name="Nucleic Acids Res.">
        <title>The genome sequence of Xanthomonas oryzae pathovar oryzae KACC10331, the bacterial blight pathogen of rice.</title>
        <authorList>
            <person name="Lee B.-M."/>
            <person name="Park Y.-J."/>
            <person name="Park D.-S."/>
            <person name="Kang H.-W."/>
            <person name="Kim J.-G."/>
            <person name="Song E.-S."/>
            <person name="Park I.-C."/>
            <person name="Yoon U.-H."/>
            <person name="Hahn J.-H."/>
            <person name="Koo B.-S."/>
            <person name="Lee G.-B."/>
            <person name="Kim H."/>
            <person name="Park H.-S."/>
            <person name="Yoon K.-O."/>
            <person name="Kim J.-H."/>
            <person name="Jung C.-H."/>
            <person name="Koh N.-H."/>
            <person name="Seo J.-S."/>
            <person name="Go S.-J."/>
        </authorList>
    </citation>
    <scope>NUCLEOTIDE SEQUENCE [LARGE SCALE GENOMIC DNA]</scope>
    <source>
        <strain>KACC10331 / KXO85</strain>
    </source>
</reference>
<gene>
    <name evidence="1" type="primary">aroK</name>
    <name type="ordered locus">XOO1244</name>
</gene>
<protein>
    <recommendedName>
        <fullName evidence="1">Shikimate kinase</fullName>
        <shortName evidence="1">SK</shortName>
        <ecNumber evidence="1">2.7.1.71</ecNumber>
    </recommendedName>
</protein>
<feature type="chain" id="PRO_0000237961" description="Shikimate kinase">
    <location>
        <begin position="1"/>
        <end position="180"/>
    </location>
</feature>
<feature type="binding site" evidence="1">
    <location>
        <begin position="14"/>
        <end position="19"/>
    </location>
    <ligand>
        <name>ATP</name>
        <dbReference type="ChEBI" id="CHEBI:30616"/>
    </ligand>
</feature>
<feature type="binding site" evidence="1">
    <location>
        <position position="18"/>
    </location>
    <ligand>
        <name>Mg(2+)</name>
        <dbReference type="ChEBI" id="CHEBI:18420"/>
    </ligand>
</feature>
<feature type="binding site" evidence="1">
    <location>
        <position position="36"/>
    </location>
    <ligand>
        <name>substrate</name>
    </ligand>
</feature>
<feature type="binding site" evidence="1">
    <location>
        <position position="60"/>
    </location>
    <ligand>
        <name>substrate</name>
    </ligand>
</feature>
<feature type="binding site" evidence="1">
    <location>
        <position position="82"/>
    </location>
    <ligand>
        <name>substrate</name>
    </ligand>
</feature>
<feature type="binding site" evidence="1">
    <location>
        <position position="120"/>
    </location>
    <ligand>
        <name>ATP</name>
        <dbReference type="ChEBI" id="CHEBI:30616"/>
    </ligand>
</feature>
<feature type="binding site" evidence="1">
    <location>
        <position position="139"/>
    </location>
    <ligand>
        <name>substrate</name>
    </ligand>
</feature>
<dbReference type="EC" id="2.7.1.71" evidence="1"/>
<dbReference type="EMBL" id="AE013598">
    <property type="protein sequence ID" value="AAW74498.1"/>
    <property type="status" value="ALT_INIT"/>
    <property type="molecule type" value="Genomic_DNA"/>
</dbReference>
<dbReference type="SMR" id="Q5H3H3"/>
<dbReference type="STRING" id="291331.XOO1244"/>
<dbReference type="KEGG" id="xoo:XOO1244"/>
<dbReference type="HOGENOM" id="CLU_057607_3_2_6"/>
<dbReference type="UniPathway" id="UPA00053">
    <property type="reaction ID" value="UER00088"/>
</dbReference>
<dbReference type="Proteomes" id="UP000006735">
    <property type="component" value="Chromosome"/>
</dbReference>
<dbReference type="GO" id="GO:0005829">
    <property type="term" value="C:cytosol"/>
    <property type="evidence" value="ECO:0007669"/>
    <property type="project" value="TreeGrafter"/>
</dbReference>
<dbReference type="GO" id="GO:0005524">
    <property type="term" value="F:ATP binding"/>
    <property type="evidence" value="ECO:0007669"/>
    <property type="project" value="UniProtKB-UniRule"/>
</dbReference>
<dbReference type="GO" id="GO:0000287">
    <property type="term" value="F:magnesium ion binding"/>
    <property type="evidence" value="ECO:0007669"/>
    <property type="project" value="UniProtKB-UniRule"/>
</dbReference>
<dbReference type="GO" id="GO:0004765">
    <property type="term" value="F:shikimate kinase activity"/>
    <property type="evidence" value="ECO:0007669"/>
    <property type="project" value="UniProtKB-UniRule"/>
</dbReference>
<dbReference type="GO" id="GO:0008652">
    <property type="term" value="P:amino acid biosynthetic process"/>
    <property type="evidence" value="ECO:0007669"/>
    <property type="project" value="UniProtKB-KW"/>
</dbReference>
<dbReference type="GO" id="GO:0009073">
    <property type="term" value="P:aromatic amino acid family biosynthetic process"/>
    <property type="evidence" value="ECO:0007669"/>
    <property type="project" value="UniProtKB-KW"/>
</dbReference>
<dbReference type="GO" id="GO:0009423">
    <property type="term" value="P:chorismate biosynthetic process"/>
    <property type="evidence" value="ECO:0007669"/>
    <property type="project" value="UniProtKB-UniRule"/>
</dbReference>
<dbReference type="CDD" id="cd00464">
    <property type="entry name" value="SK"/>
    <property type="match status" value="1"/>
</dbReference>
<dbReference type="Gene3D" id="3.40.50.300">
    <property type="entry name" value="P-loop containing nucleotide triphosphate hydrolases"/>
    <property type="match status" value="1"/>
</dbReference>
<dbReference type="HAMAP" id="MF_00109">
    <property type="entry name" value="Shikimate_kinase"/>
    <property type="match status" value="1"/>
</dbReference>
<dbReference type="InterPro" id="IPR027417">
    <property type="entry name" value="P-loop_NTPase"/>
</dbReference>
<dbReference type="InterPro" id="IPR031322">
    <property type="entry name" value="Shikimate/glucono_kinase"/>
</dbReference>
<dbReference type="InterPro" id="IPR000623">
    <property type="entry name" value="Shikimate_kinase/TSH1"/>
</dbReference>
<dbReference type="InterPro" id="IPR023000">
    <property type="entry name" value="Shikimate_kinase_CS"/>
</dbReference>
<dbReference type="PANTHER" id="PTHR21087">
    <property type="entry name" value="SHIKIMATE KINASE"/>
    <property type="match status" value="1"/>
</dbReference>
<dbReference type="PANTHER" id="PTHR21087:SF16">
    <property type="entry name" value="SHIKIMATE KINASE 1, CHLOROPLASTIC"/>
    <property type="match status" value="1"/>
</dbReference>
<dbReference type="Pfam" id="PF01202">
    <property type="entry name" value="SKI"/>
    <property type="match status" value="1"/>
</dbReference>
<dbReference type="PRINTS" id="PR01100">
    <property type="entry name" value="SHIKIMTKNASE"/>
</dbReference>
<dbReference type="SUPFAM" id="SSF52540">
    <property type="entry name" value="P-loop containing nucleoside triphosphate hydrolases"/>
    <property type="match status" value="1"/>
</dbReference>
<dbReference type="PROSITE" id="PS01128">
    <property type="entry name" value="SHIKIMATE_KINASE"/>
    <property type="match status" value="1"/>
</dbReference>
<keyword id="KW-0028">Amino-acid biosynthesis</keyword>
<keyword id="KW-0057">Aromatic amino acid biosynthesis</keyword>
<keyword id="KW-0067">ATP-binding</keyword>
<keyword id="KW-0963">Cytoplasm</keyword>
<keyword id="KW-0418">Kinase</keyword>
<keyword id="KW-0460">Magnesium</keyword>
<keyword id="KW-0479">Metal-binding</keyword>
<keyword id="KW-0547">Nucleotide-binding</keyword>
<keyword id="KW-1185">Reference proteome</keyword>
<keyword id="KW-0808">Transferase</keyword>
<comment type="function">
    <text evidence="1">Catalyzes the specific phosphorylation of the 3-hydroxyl group of shikimic acid using ATP as a cosubstrate.</text>
</comment>
<comment type="catalytic activity">
    <reaction evidence="1">
        <text>shikimate + ATP = 3-phosphoshikimate + ADP + H(+)</text>
        <dbReference type="Rhea" id="RHEA:13121"/>
        <dbReference type="ChEBI" id="CHEBI:15378"/>
        <dbReference type="ChEBI" id="CHEBI:30616"/>
        <dbReference type="ChEBI" id="CHEBI:36208"/>
        <dbReference type="ChEBI" id="CHEBI:145989"/>
        <dbReference type="ChEBI" id="CHEBI:456216"/>
        <dbReference type="EC" id="2.7.1.71"/>
    </reaction>
</comment>
<comment type="cofactor">
    <cofactor evidence="1">
        <name>Mg(2+)</name>
        <dbReference type="ChEBI" id="CHEBI:18420"/>
    </cofactor>
    <text evidence="1">Binds 1 Mg(2+) ion per subunit.</text>
</comment>
<comment type="pathway">
    <text evidence="1">Metabolic intermediate biosynthesis; chorismate biosynthesis; chorismate from D-erythrose 4-phosphate and phosphoenolpyruvate: step 5/7.</text>
</comment>
<comment type="subunit">
    <text evidence="1">Monomer.</text>
</comment>
<comment type="subcellular location">
    <subcellularLocation>
        <location evidence="1">Cytoplasm</location>
    </subcellularLocation>
</comment>
<comment type="similarity">
    <text evidence="1">Belongs to the shikimate kinase family.</text>
</comment>
<comment type="sequence caution" evidence="2">
    <conflict type="erroneous initiation">
        <sequence resource="EMBL-CDS" id="AAW74498"/>
    </conflict>
</comment>
<name>AROK_XANOR</name>
<accession>Q5H3H3</accession>
<evidence type="ECO:0000255" key="1">
    <source>
        <dbReference type="HAMAP-Rule" id="MF_00109"/>
    </source>
</evidence>
<evidence type="ECO:0000305" key="2"/>
<sequence>MNPAPNLVMVGPMGAGKSCIGRRLAERFGLEFVDVDQAIVEQVGSSIPAIFAQHGEAGFRQHEADTLQALLEQDNKLISTGGGTVLDPHNRQRICARGFVVHLHVSVPTQLTRLARDRNRPLLQRADREQLLHAMAAHRTPLYHEVADLSLETDHFSPAEATAQLVLRLAAQWRMSSAPA</sequence>
<proteinExistence type="inferred from homology"/>
<organism>
    <name type="scientific">Xanthomonas oryzae pv. oryzae (strain KACC10331 / KXO85)</name>
    <dbReference type="NCBI Taxonomy" id="291331"/>
    <lineage>
        <taxon>Bacteria</taxon>
        <taxon>Pseudomonadati</taxon>
        <taxon>Pseudomonadota</taxon>
        <taxon>Gammaproteobacteria</taxon>
        <taxon>Lysobacterales</taxon>
        <taxon>Lysobacteraceae</taxon>
        <taxon>Xanthomonas</taxon>
    </lineage>
</organism>